<organism>
    <name type="scientific">Ajellomyces capsulatus (strain G186AR / H82 / ATCC MYA-2454 / RMSCC 2432)</name>
    <name type="common">Darling's disease fungus</name>
    <name type="synonym">Histoplasma capsulatum</name>
    <dbReference type="NCBI Taxonomy" id="447093"/>
    <lineage>
        <taxon>Eukaryota</taxon>
        <taxon>Fungi</taxon>
        <taxon>Dikarya</taxon>
        <taxon>Ascomycota</taxon>
        <taxon>Pezizomycotina</taxon>
        <taxon>Eurotiomycetes</taxon>
        <taxon>Eurotiomycetidae</taxon>
        <taxon>Onygenales</taxon>
        <taxon>Ajellomycetaceae</taxon>
        <taxon>Histoplasma</taxon>
    </lineage>
</organism>
<protein>
    <recommendedName>
        <fullName evidence="1">Ubiquinone biosynthesis protein COQ4, mitochondrial</fullName>
    </recommendedName>
    <alternativeName>
        <fullName>4-hydroxy-3-methoxy-5-polyprenylbenzoate decarboxylase</fullName>
        <ecNumber evidence="1">4.1.1.130</ecNumber>
    </alternativeName>
    <alternativeName>
        <fullName evidence="1">Coenzyme Q biosynthesis protein 4</fullName>
    </alternativeName>
</protein>
<sequence length="277" mass="31897">MLTKRALRTTDPYRRVLSRGFSVLNRPSPNYPGHVPLTTLERGALAVGSAIGSLINPRRADLIAALGEATATPYFIYRLRDVMLSDPTGRRILRNQPSINSQTLSVEYLRSLSPNTVGRTYVDWLDREGVGPDTRAKVQYIDDKECAYVMQRYRECHDFYHAITGLPVVVEGEIALKTFEFANTLLPMTGLSMFAVMRLKPEEKERFWKLHLPWAVRNGLASKAVINVYWEEQLERDVDELRKELGIEKPVDLREIRKIMRRQKKMAEEAAKTKKRY</sequence>
<reference key="1">
    <citation type="submission" date="2009-02" db="EMBL/GenBank/DDBJ databases">
        <title>The genome sequence of Ajellomyces capsulatus strain G186AR.</title>
        <authorList>
            <person name="Champion M."/>
            <person name="Cuomo C.A."/>
            <person name="Ma L.-J."/>
            <person name="Henn M.R."/>
            <person name="Sil A."/>
            <person name="Goldman B."/>
            <person name="Young S.K."/>
            <person name="Kodira C.D."/>
            <person name="Zeng Q."/>
            <person name="Koehrsen M."/>
            <person name="Alvarado L."/>
            <person name="Berlin A."/>
            <person name="Borenstein D."/>
            <person name="Chen Z."/>
            <person name="Engels R."/>
            <person name="Freedman E."/>
            <person name="Gellesch M."/>
            <person name="Goldberg J."/>
            <person name="Griggs A."/>
            <person name="Gujja S."/>
            <person name="Heiman D."/>
            <person name="Hepburn T."/>
            <person name="Howarth C."/>
            <person name="Jen D."/>
            <person name="Larson L."/>
            <person name="Lewis B."/>
            <person name="Mehta T."/>
            <person name="Park D."/>
            <person name="Pearson M."/>
            <person name="Roberts A."/>
            <person name="Saif S."/>
            <person name="Shea T."/>
            <person name="Shenoy N."/>
            <person name="Sisk P."/>
            <person name="Stolte C."/>
            <person name="Sykes S."/>
            <person name="Walk T."/>
            <person name="White J."/>
            <person name="Yandava C."/>
            <person name="Klein B."/>
            <person name="McEwen J.G."/>
            <person name="Puccia R."/>
            <person name="Goldman G.H."/>
            <person name="Felipe M.S."/>
            <person name="Nino-Vega G."/>
            <person name="San-Blas G."/>
            <person name="Taylor J."/>
            <person name="Mendoza L."/>
            <person name="Galagan J.E."/>
            <person name="Nusbaum C."/>
            <person name="Birren B.W."/>
        </authorList>
    </citation>
    <scope>NUCLEOTIDE SEQUENCE [LARGE SCALE GENOMIC DNA]</scope>
    <source>
        <strain>G186AR / H82 / ATCC MYA-2454 / RMSCC 2432</strain>
    </source>
</reference>
<proteinExistence type="inferred from homology"/>
<comment type="function">
    <text evidence="1">Lyase that catalyzes the C1-decarboxylation of 4-hydroxy-3-methoxy-5-(all-trans-polyprenyl)benzoic acid into 2-methoxy-6-(all-trans-polyprenyl)phenol during ubiquinone biosynthesis.</text>
</comment>
<comment type="catalytic activity">
    <reaction evidence="1">
        <text>a 4-hydroxy-3-methoxy-5-(all-trans-polyprenyl)benzoate + H(+) = a 2-methoxy-6-(all-trans-polyprenyl)phenol + CO2</text>
        <dbReference type="Rhea" id="RHEA:81179"/>
        <dbReference type="Rhea" id="RHEA-COMP:9551"/>
        <dbReference type="Rhea" id="RHEA-COMP:10931"/>
        <dbReference type="ChEBI" id="CHEBI:15378"/>
        <dbReference type="ChEBI" id="CHEBI:16526"/>
        <dbReference type="ChEBI" id="CHEBI:62731"/>
        <dbReference type="ChEBI" id="CHEBI:84443"/>
        <dbReference type="EC" id="4.1.1.130"/>
    </reaction>
</comment>
<comment type="cofactor">
    <cofactor evidence="1">
        <name>Zn(2+)</name>
        <dbReference type="ChEBI" id="CHEBI:29105"/>
    </cofactor>
</comment>
<comment type="pathway">
    <text evidence="1">Cofactor biosynthesis; ubiquinone biosynthesis.</text>
</comment>
<comment type="subunit">
    <text evidence="1">Component of a multi-subunit COQ enzyme complex, composed of at least COQ3, COQ4, COQ5, COQ6, COQ7 and COQ9.</text>
</comment>
<comment type="subcellular location">
    <subcellularLocation>
        <location evidence="1">Mitochondrion inner membrane</location>
        <topology evidence="1">Peripheral membrane protein</topology>
        <orientation evidence="1">Matrix side</orientation>
    </subcellularLocation>
</comment>
<comment type="similarity">
    <text evidence="1">Belongs to the COQ4 family.</text>
</comment>
<gene>
    <name evidence="1" type="primary">COQ4</name>
    <name type="ORF">HCBG_03420</name>
</gene>
<accession>C0NJU0</accession>
<dbReference type="EC" id="4.1.1.130" evidence="1"/>
<dbReference type="EMBL" id="GG663366">
    <property type="protein sequence ID" value="EEH08131.1"/>
    <property type="molecule type" value="Genomic_DNA"/>
</dbReference>
<dbReference type="SMR" id="C0NJU0"/>
<dbReference type="FunCoup" id="C0NJU0">
    <property type="interactions" value="491"/>
</dbReference>
<dbReference type="STRING" id="447093.C0NJU0"/>
<dbReference type="VEuPathDB" id="FungiDB:I7I50_07024"/>
<dbReference type="HOGENOM" id="CLU_061241_0_0_1"/>
<dbReference type="InParanoid" id="C0NJU0"/>
<dbReference type="UniPathway" id="UPA00232"/>
<dbReference type="Proteomes" id="UP000001631">
    <property type="component" value="Unassembled WGS sequence"/>
</dbReference>
<dbReference type="GO" id="GO:0031314">
    <property type="term" value="C:extrinsic component of mitochondrial inner membrane"/>
    <property type="evidence" value="ECO:0007669"/>
    <property type="project" value="UniProtKB-UniRule"/>
</dbReference>
<dbReference type="GO" id="GO:0006744">
    <property type="term" value="P:ubiquinone biosynthetic process"/>
    <property type="evidence" value="ECO:0007669"/>
    <property type="project" value="UniProtKB-UniRule"/>
</dbReference>
<dbReference type="HAMAP" id="MF_03111">
    <property type="entry name" value="Coq4"/>
    <property type="match status" value="1"/>
</dbReference>
<dbReference type="InterPro" id="IPR007715">
    <property type="entry name" value="Coq4"/>
</dbReference>
<dbReference type="InterPro" id="IPR027540">
    <property type="entry name" value="Coq4_euk"/>
</dbReference>
<dbReference type="PANTHER" id="PTHR12922">
    <property type="entry name" value="UBIQUINONE BIOSYNTHESIS PROTEIN"/>
    <property type="match status" value="1"/>
</dbReference>
<dbReference type="PANTHER" id="PTHR12922:SF7">
    <property type="entry name" value="UBIQUINONE BIOSYNTHESIS PROTEIN COQ4 HOMOLOG, MITOCHONDRIAL"/>
    <property type="match status" value="1"/>
</dbReference>
<dbReference type="Pfam" id="PF05019">
    <property type="entry name" value="Coq4"/>
    <property type="match status" value="1"/>
</dbReference>
<evidence type="ECO:0000255" key="1">
    <source>
        <dbReference type="HAMAP-Rule" id="MF_03111"/>
    </source>
</evidence>
<keyword id="KW-0456">Lyase</keyword>
<keyword id="KW-0472">Membrane</keyword>
<keyword id="KW-0479">Metal-binding</keyword>
<keyword id="KW-0496">Mitochondrion</keyword>
<keyword id="KW-0999">Mitochondrion inner membrane</keyword>
<keyword id="KW-1185">Reference proteome</keyword>
<keyword id="KW-0809">Transit peptide</keyword>
<keyword id="KW-0831">Ubiquinone biosynthesis</keyword>
<keyword id="KW-0862">Zinc</keyword>
<name>COQ4_AJECG</name>
<feature type="transit peptide" description="Mitochondrion" evidence="1">
    <location>
        <begin position="1"/>
        <end position="14"/>
    </location>
</feature>
<feature type="chain" id="PRO_0000388089" description="Ubiquinone biosynthesis protein COQ4, mitochondrial">
    <location>
        <begin position="15"/>
        <end position="277"/>
    </location>
</feature>
<feature type="binding site" evidence="1">
    <location>
        <position position="157"/>
    </location>
    <ligand>
        <name>Zn(2+)</name>
        <dbReference type="ChEBI" id="CHEBI:29105"/>
    </ligand>
</feature>
<feature type="binding site" evidence="1">
    <location>
        <position position="158"/>
    </location>
    <ligand>
        <name>Zn(2+)</name>
        <dbReference type="ChEBI" id="CHEBI:29105"/>
    </ligand>
</feature>
<feature type="binding site" evidence="1">
    <location>
        <position position="161"/>
    </location>
    <ligand>
        <name>Zn(2+)</name>
        <dbReference type="ChEBI" id="CHEBI:29105"/>
    </ligand>
</feature>
<feature type="binding site" evidence="1">
    <location>
        <position position="173"/>
    </location>
    <ligand>
        <name>Zn(2+)</name>
        <dbReference type="ChEBI" id="CHEBI:29105"/>
    </ligand>
</feature>